<reference key="1">
    <citation type="submission" date="2001-09" db="EMBL/GenBank/DDBJ databases">
        <title>A new regulatory gene locus involved in biofilm formation of Staphylococcus epidermidis.</title>
        <authorList>
            <person name="Bartscht K."/>
            <person name="Knobloch J.K.M."/>
            <person name="Mack D."/>
        </authorList>
    </citation>
    <scope>NUCLEOTIDE SEQUENCE [GENOMIC DNA]</scope>
</reference>
<accession>Q937Z1</accession>
<dbReference type="EC" id="2.7.7.23" evidence="1"/>
<dbReference type="EC" id="2.3.1.157" evidence="1"/>
<dbReference type="EMBL" id="AY056454">
    <property type="protein sequence ID" value="AAL11408.1"/>
    <property type="molecule type" value="Genomic_DNA"/>
</dbReference>
<dbReference type="UniPathway" id="UPA00113">
    <property type="reaction ID" value="UER00532"/>
</dbReference>
<dbReference type="UniPathway" id="UPA00113">
    <property type="reaction ID" value="UER00533"/>
</dbReference>
<dbReference type="UniPathway" id="UPA00973"/>
<dbReference type="GO" id="GO:0005737">
    <property type="term" value="C:cytoplasm"/>
    <property type="evidence" value="ECO:0007669"/>
    <property type="project" value="UniProtKB-SubCell"/>
</dbReference>
<dbReference type="GO" id="GO:0016020">
    <property type="term" value="C:membrane"/>
    <property type="evidence" value="ECO:0007669"/>
    <property type="project" value="GOC"/>
</dbReference>
<dbReference type="GO" id="GO:0019134">
    <property type="term" value="F:glucosamine-1-phosphate N-acetyltransferase activity"/>
    <property type="evidence" value="ECO:0007669"/>
    <property type="project" value="UniProtKB-UniRule"/>
</dbReference>
<dbReference type="GO" id="GO:0000287">
    <property type="term" value="F:magnesium ion binding"/>
    <property type="evidence" value="ECO:0007669"/>
    <property type="project" value="UniProtKB-UniRule"/>
</dbReference>
<dbReference type="GO" id="GO:0003977">
    <property type="term" value="F:UDP-N-acetylglucosamine diphosphorylase activity"/>
    <property type="evidence" value="ECO:0007669"/>
    <property type="project" value="UniProtKB-UniRule"/>
</dbReference>
<dbReference type="GO" id="GO:0000902">
    <property type="term" value="P:cell morphogenesis"/>
    <property type="evidence" value="ECO:0007669"/>
    <property type="project" value="UniProtKB-UniRule"/>
</dbReference>
<dbReference type="GO" id="GO:0071555">
    <property type="term" value="P:cell wall organization"/>
    <property type="evidence" value="ECO:0007669"/>
    <property type="project" value="UniProtKB-KW"/>
</dbReference>
<dbReference type="GO" id="GO:0009245">
    <property type="term" value="P:lipid A biosynthetic process"/>
    <property type="evidence" value="ECO:0007669"/>
    <property type="project" value="UniProtKB-UniRule"/>
</dbReference>
<dbReference type="GO" id="GO:0009252">
    <property type="term" value="P:peptidoglycan biosynthetic process"/>
    <property type="evidence" value="ECO:0007669"/>
    <property type="project" value="UniProtKB-UniRule"/>
</dbReference>
<dbReference type="GO" id="GO:0008360">
    <property type="term" value="P:regulation of cell shape"/>
    <property type="evidence" value="ECO:0007669"/>
    <property type="project" value="UniProtKB-KW"/>
</dbReference>
<dbReference type="GO" id="GO:0006048">
    <property type="term" value="P:UDP-N-acetylglucosamine biosynthetic process"/>
    <property type="evidence" value="ECO:0007669"/>
    <property type="project" value="UniProtKB-UniPathway"/>
</dbReference>
<dbReference type="CDD" id="cd02540">
    <property type="entry name" value="GT2_GlmU_N_bac"/>
    <property type="match status" value="1"/>
</dbReference>
<dbReference type="CDD" id="cd03353">
    <property type="entry name" value="LbH_GlmU_C"/>
    <property type="match status" value="1"/>
</dbReference>
<dbReference type="Gene3D" id="2.160.10.10">
    <property type="entry name" value="Hexapeptide repeat proteins"/>
    <property type="match status" value="1"/>
</dbReference>
<dbReference type="Gene3D" id="3.90.550.10">
    <property type="entry name" value="Spore Coat Polysaccharide Biosynthesis Protein SpsA, Chain A"/>
    <property type="match status" value="1"/>
</dbReference>
<dbReference type="HAMAP" id="MF_01631">
    <property type="entry name" value="GlmU"/>
    <property type="match status" value="1"/>
</dbReference>
<dbReference type="InterPro" id="IPR005882">
    <property type="entry name" value="Bifunctional_GlmU"/>
</dbReference>
<dbReference type="InterPro" id="IPR050065">
    <property type="entry name" value="GlmU-like"/>
</dbReference>
<dbReference type="InterPro" id="IPR038009">
    <property type="entry name" value="GlmU_C_LbH"/>
</dbReference>
<dbReference type="InterPro" id="IPR001451">
    <property type="entry name" value="Hexapep"/>
</dbReference>
<dbReference type="InterPro" id="IPR018357">
    <property type="entry name" value="Hexapep_transf_CS"/>
</dbReference>
<dbReference type="InterPro" id="IPR005835">
    <property type="entry name" value="NTP_transferase_dom"/>
</dbReference>
<dbReference type="InterPro" id="IPR029044">
    <property type="entry name" value="Nucleotide-diphossugar_trans"/>
</dbReference>
<dbReference type="InterPro" id="IPR011004">
    <property type="entry name" value="Trimer_LpxA-like_sf"/>
</dbReference>
<dbReference type="NCBIfam" id="TIGR01173">
    <property type="entry name" value="glmU"/>
    <property type="match status" value="1"/>
</dbReference>
<dbReference type="NCBIfam" id="NF010934">
    <property type="entry name" value="PRK14354.1"/>
    <property type="match status" value="1"/>
</dbReference>
<dbReference type="PANTHER" id="PTHR43584:SF3">
    <property type="entry name" value="BIFUNCTIONAL PROTEIN GLMU"/>
    <property type="match status" value="1"/>
</dbReference>
<dbReference type="PANTHER" id="PTHR43584">
    <property type="entry name" value="NUCLEOTIDYL TRANSFERASE"/>
    <property type="match status" value="1"/>
</dbReference>
<dbReference type="Pfam" id="PF00132">
    <property type="entry name" value="Hexapep"/>
    <property type="match status" value="1"/>
</dbReference>
<dbReference type="Pfam" id="PF00483">
    <property type="entry name" value="NTP_transferase"/>
    <property type="match status" value="1"/>
</dbReference>
<dbReference type="SUPFAM" id="SSF53448">
    <property type="entry name" value="Nucleotide-diphospho-sugar transferases"/>
    <property type="match status" value="1"/>
</dbReference>
<dbReference type="SUPFAM" id="SSF51161">
    <property type="entry name" value="Trimeric LpxA-like enzymes"/>
    <property type="match status" value="1"/>
</dbReference>
<dbReference type="PROSITE" id="PS00101">
    <property type="entry name" value="HEXAPEP_TRANSFERASES"/>
    <property type="match status" value="1"/>
</dbReference>
<feature type="chain" id="PRO_0000068714" description="Bifunctional protein GlmU">
    <location>
        <begin position="1"/>
        <end position="451"/>
    </location>
</feature>
<feature type="region of interest" description="Pyrophosphorylase" evidence="1">
    <location>
        <begin position="1"/>
        <end position="229"/>
    </location>
</feature>
<feature type="region of interest" description="Linker" evidence="1">
    <location>
        <begin position="230"/>
        <end position="250"/>
    </location>
</feature>
<feature type="region of interest" description="N-acetyltransferase" evidence="1">
    <location>
        <begin position="251"/>
        <end position="451"/>
    </location>
</feature>
<feature type="active site" description="Proton acceptor" evidence="1">
    <location>
        <position position="362"/>
    </location>
</feature>
<feature type="binding site" evidence="1">
    <location>
        <begin position="8"/>
        <end position="11"/>
    </location>
    <ligand>
        <name>UDP-N-acetyl-alpha-D-glucosamine</name>
        <dbReference type="ChEBI" id="CHEBI:57705"/>
    </ligand>
</feature>
<feature type="binding site" evidence="1">
    <location>
        <position position="22"/>
    </location>
    <ligand>
        <name>UDP-N-acetyl-alpha-D-glucosamine</name>
        <dbReference type="ChEBI" id="CHEBI:57705"/>
    </ligand>
</feature>
<feature type="binding site" evidence="1">
    <location>
        <position position="72"/>
    </location>
    <ligand>
        <name>UDP-N-acetyl-alpha-D-glucosamine</name>
        <dbReference type="ChEBI" id="CHEBI:57705"/>
    </ligand>
</feature>
<feature type="binding site" evidence="1">
    <location>
        <begin position="77"/>
        <end position="78"/>
    </location>
    <ligand>
        <name>UDP-N-acetyl-alpha-D-glucosamine</name>
        <dbReference type="ChEBI" id="CHEBI:57705"/>
    </ligand>
</feature>
<feature type="binding site" evidence="1">
    <location>
        <position position="102"/>
    </location>
    <ligand>
        <name>Mg(2+)</name>
        <dbReference type="ChEBI" id="CHEBI:18420"/>
    </ligand>
</feature>
<feature type="binding site" evidence="1">
    <location>
        <position position="139"/>
    </location>
    <ligand>
        <name>UDP-N-acetyl-alpha-D-glucosamine</name>
        <dbReference type="ChEBI" id="CHEBI:57705"/>
    </ligand>
</feature>
<feature type="binding site" evidence="1">
    <location>
        <position position="154"/>
    </location>
    <ligand>
        <name>UDP-N-acetyl-alpha-D-glucosamine</name>
        <dbReference type="ChEBI" id="CHEBI:57705"/>
    </ligand>
</feature>
<feature type="binding site" evidence="1">
    <location>
        <position position="227"/>
    </location>
    <ligand>
        <name>Mg(2+)</name>
        <dbReference type="ChEBI" id="CHEBI:18420"/>
    </ligand>
</feature>
<feature type="binding site" evidence="1">
    <location>
        <position position="227"/>
    </location>
    <ligand>
        <name>UDP-N-acetyl-alpha-D-glucosamine</name>
        <dbReference type="ChEBI" id="CHEBI:57705"/>
    </ligand>
</feature>
<feature type="binding site" evidence="1">
    <location>
        <position position="332"/>
    </location>
    <ligand>
        <name>UDP-N-acetyl-alpha-D-glucosamine</name>
        <dbReference type="ChEBI" id="CHEBI:57705"/>
    </ligand>
</feature>
<feature type="binding site" evidence="1">
    <location>
        <position position="350"/>
    </location>
    <ligand>
        <name>UDP-N-acetyl-alpha-D-glucosamine</name>
        <dbReference type="ChEBI" id="CHEBI:57705"/>
    </ligand>
</feature>
<feature type="binding site" evidence="1">
    <location>
        <position position="365"/>
    </location>
    <ligand>
        <name>UDP-N-acetyl-alpha-D-glucosamine</name>
        <dbReference type="ChEBI" id="CHEBI:57705"/>
    </ligand>
</feature>
<feature type="binding site" evidence="1">
    <location>
        <position position="376"/>
    </location>
    <ligand>
        <name>UDP-N-acetyl-alpha-D-glucosamine</name>
        <dbReference type="ChEBI" id="CHEBI:57705"/>
    </ligand>
</feature>
<feature type="binding site" evidence="1">
    <location>
        <begin position="385"/>
        <end position="386"/>
    </location>
    <ligand>
        <name>acetyl-CoA</name>
        <dbReference type="ChEBI" id="CHEBI:57288"/>
    </ligand>
</feature>
<feature type="binding site" evidence="1">
    <location>
        <position position="422"/>
    </location>
    <ligand>
        <name>acetyl-CoA</name>
        <dbReference type="ChEBI" id="CHEBI:57288"/>
    </ligand>
</feature>
<feature type="binding site" evidence="1">
    <location>
        <position position="439"/>
    </location>
    <ligand>
        <name>acetyl-CoA</name>
        <dbReference type="ChEBI" id="CHEBI:57288"/>
    </ligand>
</feature>
<sequence length="451" mass="49167">MQRHAIILAAGKGTRMKSKKYKVLHEVAGKPMVEHVLNNVKQAGVDQIVTIIGHGAESVKDTLGNQSLYSFQDKQLGTAHAVKMAHEHLADKEGTTLVVCGDTPLITYQTLQSLIEHHESTQSHVTVLSASTINPYGYGRIIRNHNGILERIVEEKDANDSERAIKEISSGIFAFNNRVLFEKLEQVKNDNAQGEYYLPDVLSLILKDGGKAEVYCTEDFDEIIGVNDRLMLSEAEKALQQRINRYHMENGVTIIDPSSTFIGTDVKIGIDTTIEPGVRIGGHTTIEEDVWIGQYSEINNSTIHSNANIKQSVINDSIVGENXXVGPFAQLRPGSNLGSEVKVGNFVEVKKADIKDGAKVSHLSYIGDAEIGERTNIGCGSITVNYDGANKFKTIVGKDAFIGCNTNLIAPVTVGNHTLIAAGSTITDNIPEDSLALARARQVNKEGYLKK</sequence>
<protein>
    <recommendedName>
        <fullName evidence="1">Bifunctional protein GlmU</fullName>
    </recommendedName>
    <domain>
        <recommendedName>
            <fullName evidence="1">UDP-N-acetylglucosamine pyrophosphorylase</fullName>
            <ecNumber evidence="1">2.7.7.23</ecNumber>
        </recommendedName>
        <alternativeName>
            <fullName evidence="1">N-acetylglucosamine-1-phosphate uridyltransferase</fullName>
        </alternativeName>
    </domain>
    <domain>
        <recommendedName>
            <fullName evidence="1">Glucosamine-1-phosphate N-acetyltransferase</fullName>
            <ecNumber evidence="1">2.3.1.157</ecNumber>
        </recommendedName>
    </domain>
</protein>
<proteinExistence type="inferred from homology"/>
<gene>
    <name evidence="1" type="primary">glmU</name>
    <name type="synonym">gcaD</name>
</gene>
<name>GLMU_STAEP</name>
<keyword id="KW-0012">Acyltransferase</keyword>
<keyword id="KW-0133">Cell shape</keyword>
<keyword id="KW-0961">Cell wall biogenesis/degradation</keyword>
<keyword id="KW-0963">Cytoplasm</keyword>
<keyword id="KW-0460">Magnesium</keyword>
<keyword id="KW-0479">Metal-binding</keyword>
<keyword id="KW-0511">Multifunctional enzyme</keyword>
<keyword id="KW-0548">Nucleotidyltransferase</keyword>
<keyword id="KW-0573">Peptidoglycan synthesis</keyword>
<keyword id="KW-0677">Repeat</keyword>
<keyword id="KW-0808">Transferase</keyword>
<comment type="function">
    <text evidence="1">Catalyzes the last two sequential reactions in the de novo biosynthetic pathway for UDP-N-acetylglucosamine (UDP-GlcNAc). The C-terminal domain catalyzes the transfer of acetyl group from acetyl coenzyme A to glucosamine-1-phosphate (GlcN-1-P) to produce N-acetylglucosamine-1-phosphate (GlcNAc-1-P), which is converted into UDP-GlcNAc by the transfer of uridine 5-monophosphate (from uridine 5-triphosphate), a reaction catalyzed by the N-terminal domain.</text>
</comment>
<comment type="catalytic activity">
    <reaction evidence="1">
        <text>alpha-D-glucosamine 1-phosphate + acetyl-CoA = N-acetyl-alpha-D-glucosamine 1-phosphate + CoA + H(+)</text>
        <dbReference type="Rhea" id="RHEA:13725"/>
        <dbReference type="ChEBI" id="CHEBI:15378"/>
        <dbReference type="ChEBI" id="CHEBI:57287"/>
        <dbReference type="ChEBI" id="CHEBI:57288"/>
        <dbReference type="ChEBI" id="CHEBI:57776"/>
        <dbReference type="ChEBI" id="CHEBI:58516"/>
        <dbReference type="EC" id="2.3.1.157"/>
    </reaction>
</comment>
<comment type="catalytic activity">
    <reaction evidence="1">
        <text>N-acetyl-alpha-D-glucosamine 1-phosphate + UTP + H(+) = UDP-N-acetyl-alpha-D-glucosamine + diphosphate</text>
        <dbReference type="Rhea" id="RHEA:13509"/>
        <dbReference type="ChEBI" id="CHEBI:15378"/>
        <dbReference type="ChEBI" id="CHEBI:33019"/>
        <dbReference type="ChEBI" id="CHEBI:46398"/>
        <dbReference type="ChEBI" id="CHEBI:57705"/>
        <dbReference type="ChEBI" id="CHEBI:57776"/>
        <dbReference type="EC" id="2.7.7.23"/>
    </reaction>
</comment>
<comment type="cofactor">
    <cofactor evidence="1">
        <name>Mg(2+)</name>
        <dbReference type="ChEBI" id="CHEBI:18420"/>
    </cofactor>
    <text evidence="1">Binds 1 Mg(2+) ion per subunit.</text>
</comment>
<comment type="pathway">
    <text evidence="1">Nucleotide-sugar biosynthesis; UDP-N-acetyl-alpha-D-glucosamine biosynthesis; N-acetyl-alpha-D-glucosamine 1-phosphate from alpha-D-glucosamine 6-phosphate (route II): step 2/2.</text>
</comment>
<comment type="pathway">
    <text evidence="1">Nucleotide-sugar biosynthesis; UDP-N-acetyl-alpha-D-glucosamine biosynthesis; UDP-N-acetyl-alpha-D-glucosamine from N-acetyl-alpha-D-glucosamine 1-phosphate: step 1/1.</text>
</comment>
<comment type="pathway">
    <text evidence="1">Bacterial outer membrane biogenesis; LPS lipid A biosynthesis.</text>
</comment>
<comment type="subunit">
    <text evidence="1">Homotrimer.</text>
</comment>
<comment type="subcellular location">
    <subcellularLocation>
        <location evidence="1">Cytoplasm</location>
    </subcellularLocation>
</comment>
<comment type="similarity">
    <text evidence="1">In the N-terminal section; belongs to the N-acetylglucosamine-1-phosphate uridyltransferase family.</text>
</comment>
<comment type="similarity">
    <text evidence="1">In the C-terminal section; belongs to the transferase hexapeptide repeat family.</text>
</comment>
<organism>
    <name type="scientific">Staphylococcus epidermidis</name>
    <dbReference type="NCBI Taxonomy" id="1282"/>
    <lineage>
        <taxon>Bacteria</taxon>
        <taxon>Bacillati</taxon>
        <taxon>Bacillota</taxon>
        <taxon>Bacilli</taxon>
        <taxon>Bacillales</taxon>
        <taxon>Staphylococcaceae</taxon>
        <taxon>Staphylococcus</taxon>
    </lineage>
</organism>
<evidence type="ECO:0000255" key="1">
    <source>
        <dbReference type="HAMAP-Rule" id="MF_01631"/>
    </source>
</evidence>